<dbReference type="EC" id="3.6.1.26" evidence="1"/>
<dbReference type="EMBL" id="CU928145">
    <property type="protein sequence ID" value="CAV01112.1"/>
    <property type="molecule type" value="Genomic_DNA"/>
</dbReference>
<dbReference type="RefSeq" id="WP_000708998.1">
    <property type="nucleotide sequence ID" value="NC_011748.1"/>
</dbReference>
<dbReference type="SMR" id="B7LA15"/>
<dbReference type="GeneID" id="93777980"/>
<dbReference type="KEGG" id="eck:EC55989_4396"/>
<dbReference type="HOGENOM" id="CLU_077117_0_1_6"/>
<dbReference type="UniPathway" id="UPA00609">
    <property type="reaction ID" value="UER00664"/>
</dbReference>
<dbReference type="Proteomes" id="UP000000746">
    <property type="component" value="Chromosome"/>
</dbReference>
<dbReference type="GO" id="GO:0005886">
    <property type="term" value="C:plasma membrane"/>
    <property type="evidence" value="ECO:0007669"/>
    <property type="project" value="UniProtKB-SubCell"/>
</dbReference>
<dbReference type="GO" id="GO:0008715">
    <property type="term" value="F:CDP-diacylglycerol diphosphatase activity"/>
    <property type="evidence" value="ECO:0007669"/>
    <property type="project" value="UniProtKB-UniRule"/>
</dbReference>
<dbReference type="GO" id="GO:0046342">
    <property type="term" value="P:CDP-diacylglycerol catabolic process"/>
    <property type="evidence" value="ECO:0007669"/>
    <property type="project" value="UniProtKB-UniRule"/>
</dbReference>
<dbReference type="GO" id="GO:0008654">
    <property type="term" value="P:phospholipid biosynthetic process"/>
    <property type="evidence" value="ECO:0007669"/>
    <property type="project" value="UniProtKB-KW"/>
</dbReference>
<dbReference type="FunFam" id="3.30.428.30:FF:000001">
    <property type="entry name" value="CDP-diacylglycerol pyrophosphatase"/>
    <property type="match status" value="1"/>
</dbReference>
<dbReference type="Gene3D" id="3.30.428.30">
    <property type="entry name" value="HIT family - CDH-like"/>
    <property type="match status" value="1"/>
</dbReference>
<dbReference type="HAMAP" id="MF_00319">
    <property type="entry name" value="Cdh"/>
    <property type="match status" value="1"/>
</dbReference>
<dbReference type="InterPro" id="IPR003763">
    <property type="entry name" value="CDP-diacylglyc_Pase"/>
</dbReference>
<dbReference type="InterPro" id="IPR015993">
    <property type="entry name" value="CDP-diacylglyc_Pase_proteobac"/>
</dbReference>
<dbReference type="InterPro" id="IPR036265">
    <property type="entry name" value="HIT-like_sf"/>
</dbReference>
<dbReference type="NCBIfam" id="TIGR00672">
    <property type="entry name" value="cdh"/>
    <property type="match status" value="1"/>
</dbReference>
<dbReference type="NCBIfam" id="NF003986">
    <property type="entry name" value="PRK05471.1-5"/>
    <property type="match status" value="1"/>
</dbReference>
<dbReference type="NCBIfam" id="NF003987">
    <property type="entry name" value="PRK05471.1-6"/>
    <property type="match status" value="1"/>
</dbReference>
<dbReference type="Pfam" id="PF02611">
    <property type="entry name" value="CDH"/>
    <property type="match status" value="1"/>
</dbReference>
<dbReference type="PIRSF" id="PIRSF001273">
    <property type="entry name" value="CDH"/>
    <property type="match status" value="1"/>
</dbReference>
<dbReference type="SUPFAM" id="SSF54197">
    <property type="entry name" value="HIT-like"/>
    <property type="match status" value="1"/>
</dbReference>
<accession>B7LA15</accession>
<keyword id="KW-0997">Cell inner membrane</keyword>
<keyword id="KW-1003">Cell membrane</keyword>
<keyword id="KW-0378">Hydrolase</keyword>
<keyword id="KW-0444">Lipid biosynthesis</keyword>
<keyword id="KW-0443">Lipid metabolism</keyword>
<keyword id="KW-0472">Membrane</keyword>
<keyword id="KW-0594">Phospholipid biosynthesis</keyword>
<keyword id="KW-1208">Phospholipid metabolism</keyword>
<keyword id="KW-1185">Reference proteome</keyword>
<keyword id="KW-0812">Transmembrane</keyword>
<keyword id="KW-1133">Transmembrane helix</keyword>
<sequence length="251" mass="28383">MKKAGLLFLVMIVIAVVAAGIGYWKLTGEESDTLRKIVLEECLPNQQQNQNPSPCAEVKPNAGYVVLKDLNGPLQYLLMPTYRINGTESPLLTDPSTPNFFWLAWQARDFMSKKYGQPVPDRAVSLAINSRTGRTQNHFHIHISCIRPDVREQLDNNLANISSRWLPLPGGLRGHEYLARRVTESELVQRSPFMMLAEEVPEAREHMGSYGLAMVRQSDNSFVLLATQRNLLTLNRASAEEIQDHQCEILR</sequence>
<organism>
    <name type="scientific">Escherichia coli (strain 55989 / EAEC)</name>
    <dbReference type="NCBI Taxonomy" id="585055"/>
    <lineage>
        <taxon>Bacteria</taxon>
        <taxon>Pseudomonadati</taxon>
        <taxon>Pseudomonadota</taxon>
        <taxon>Gammaproteobacteria</taxon>
        <taxon>Enterobacterales</taxon>
        <taxon>Enterobacteriaceae</taxon>
        <taxon>Escherichia</taxon>
    </lineage>
</organism>
<gene>
    <name evidence="1" type="primary">cdh</name>
    <name type="ordered locus">EC55989_4396</name>
</gene>
<name>CDH_ECO55</name>
<protein>
    <recommendedName>
        <fullName evidence="1">CDP-diacylglycerol pyrophosphatase</fullName>
        <ecNumber evidence="1">3.6.1.26</ecNumber>
    </recommendedName>
    <alternativeName>
        <fullName evidence="1">CDP-diacylglycerol phosphatidylhydrolase</fullName>
    </alternativeName>
    <alternativeName>
        <fullName evidence="1">CDP-diglyceride hydrolase</fullName>
    </alternativeName>
</protein>
<proteinExistence type="inferred from homology"/>
<reference key="1">
    <citation type="journal article" date="2009" name="PLoS Genet.">
        <title>Organised genome dynamics in the Escherichia coli species results in highly diverse adaptive paths.</title>
        <authorList>
            <person name="Touchon M."/>
            <person name="Hoede C."/>
            <person name="Tenaillon O."/>
            <person name="Barbe V."/>
            <person name="Baeriswyl S."/>
            <person name="Bidet P."/>
            <person name="Bingen E."/>
            <person name="Bonacorsi S."/>
            <person name="Bouchier C."/>
            <person name="Bouvet O."/>
            <person name="Calteau A."/>
            <person name="Chiapello H."/>
            <person name="Clermont O."/>
            <person name="Cruveiller S."/>
            <person name="Danchin A."/>
            <person name="Diard M."/>
            <person name="Dossat C."/>
            <person name="Karoui M.E."/>
            <person name="Frapy E."/>
            <person name="Garry L."/>
            <person name="Ghigo J.M."/>
            <person name="Gilles A.M."/>
            <person name="Johnson J."/>
            <person name="Le Bouguenec C."/>
            <person name="Lescat M."/>
            <person name="Mangenot S."/>
            <person name="Martinez-Jehanne V."/>
            <person name="Matic I."/>
            <person name="Nassif X."/>
            <person name="Oztas S."/>
            <person name="Petit M.A."/>
            <person name="Pichon C."/>
            <person name="Rouy Z."/>
            <person name="Ruf C.S."/>
            <person name="Schneider D."/>
            <person name="Tourret J."/>
            <person name="Vacherie B."/>
            <person name="Vallenet D."/>
            <person name="Medigue C."/>
            <person name="Rocha E.P.C."/>
            <person name="Denamur E."/>
        </authorList>
    </citation>
    <scope>NUCLEOTIDE SEQUENCE [LARGE SCALE GENOMIC DNA]</scope>
    <source>
        <strain>55989 / EAEC</strain>
    </source>
</reference>
<evidence type="ECO:0000255" key="1">
    <source>
        <dbReference type="HAMAP-Rule" id="MF_00319"/>
    </source>
</evidence>
<comment type="catalytic activity">
    <reaction evidence="1">
        <text>a CDP-1,2-diacyl-sn-glycerol + H2O = a 1,2-diacyl-sn-glycero-3-phosphate + CMP + 2 H(+)</text>
        <dbReference type="Rhea" id="RHEA:15221"/>
        <dbReference type="ChEBI" id="CHEBI:15377"/>
        <dbReference type="ChEBI" id="CHEBI:15378"/>
        <dbReference type="ChEBI" id="CHEBI:58332"/>
        <dbReference type="ChEBI" id="CHEBI:58608"/>
        <dbReference type="ChEBI" id="CHEBI:60377"/>
        <dbReference type="EC" id="3.6.1.26"/>
    </reaction>
</comment>
<comment type="pathway">
    <text evidence="1">Phospholipid metabolism; CDP-diacylglycerol degradation; phosphatidate from CDP-diacylglycerol: step 1/1.</text>
</comment>
<comment type="subcellular location">
    <subcellularLocation>
        <location evidence="1">Cell inner membrane</location>
        <topology evidence="1">Single-pass membrane protein</topology>
    </subcellularLocation>
</comment>
<comment type="similarity">
    <text evidence="1">Belongs to the Cdh family.</text>
</comment>
<feature type="chain" id="PRO_1000133033" description="CDP-diacylglycerol pyrophosphatase">
    <location>
        <begin position="1"/>
        <end position="251"/>
    </location>
</feature>
<feature type="transmembrane region" description="Helical" evidence="1">
    <location>
        <begin position="4"/>
        <end position="24"/>
    </location>
</feature>